<feature type="chain" id="PRO_0000276330" description="Large ribosomal subunit protein bL12c">
    <location>
        <begin position="1"/>
        <end position="129"/>
    </location>
</feature>
<name>RK12_PYRYE</name>
<proteinExistence type="inferred from homology"/>
<keyword id="KW-0150">Chloroplast</keyword>
<keyword id="KW-0934">Plastid</keyword>
<keyword id="KW-0687">Ribonucleoprotein</keyword>
<keyword id="KW-0689">Ribosomal protein</keyword>
<protein>
    <recommendedName>
        <fullName evidence="1">Large ribosomal subunit protein bL12c</fullName>
    </recommendedName>
    <alternativeName>
        <fullName evidence="2">50S ribosomal protein L12, chloroplastic</fullName>
    </alternativeName>
</protein>
<evidence type="ECO:0000255" key="1">
    <source>
        <dbReference type="HAMAP-Rule" id="MF_00368"/>
    </source>
</evidence>
<evidence type="ECO:0000305" key="2"/>
<comment type="function">
    <text evidence="1">Forms part of the ribosomal stalk which helps the ribosome interact with GTP-bound translation factors. Is thus essential for accurate translation.</text>
</comment>
<comment type="subunit">
    <text evidence="1">Homodimer. Part of the ribosomal stalk of the 50S ribosomal subunit. Forms a multimeric L10(L12)X complex, where L10 forms an elongated spine to which 2 to 4 L12 dimers bind in a sequential fashion. Binds GTP-bound translation factors.</text>
</comment>
<comment type="subcellular location">
    <subcellularLocation>
        <location>Plastid</location>
        <location>Chloroplast</location>
    </subcellularLocation>
</comment>
<comment type="similarity">
    <text evidence="1">Belongs to the bacterial ribosomal protein bL12 family.</text>
</comment>
<sequence length="129" mass="13730">MSTKVENILEELKSLNLLEAAELVNTIEETFDVDASAASGGMMMATPTSAPASAEVEEKTEFDVVLEEVPAPKKISVLKVVRPLTGLGLKEAKDLVESTPKVLKEGASKDDAETMKKQLEDAGATVIVK</sequence>
<reference key="1">
    <citation type="submission" date="2003-11" db="EMBL/GenBank/DDBJ databases">
        <title>Whole genome sequence of Porphyra yezoensis chloroplast.</title>
        <authorList>
            <person name="Kunimoto M."/>
            <person name="Morishima K."/>
            <person name="Yoshikawa M."/>
            <person name="Fukuda S."/>
            <person name="Kobayashi T."/>
            <person name="Kobayashi M."/>
            <person name="Okazaki T."/>
            <person name="Ohara I."/>
            <person name="Nakayama I."/>
        </authorList>
    </citation>
    <scope>NUCLEOTIDE SEQUENCE [LARGE SCALE GENOMIC DNA]</scope>
    <source>
        <strain>U-51</strain>
    </source>
</reference>
<accession>Q1XDE8</accession>
<geneLocation type="chloroplast"/>
<organism>
    <name type="scientific">Pyropia yezoensis</name>
    <name type="common">Susabi-nori</name>
    <name type="synonym">Porphyra yezoensis</name>
    <dbReference type="NCBI Taxonomy" id="2788"/>
    <lineage>
        <taxon>Eukaryota</taxon>
        <taxon>Rhodophyta</taxon>
        <taxon>Bangiophyceae</taxon>
        <taxon>Bangiales</taxon>
        <taxon>Bangiaceae</taxon>
        <taxon>Pyropia</taxon>
    </lineage>
</organism>
<dbReference type="EMBL" id="AP006715">
    <property type="protein sequence ID" value="BAE92463.1"/>
    <property type="molecule type" value="Genomic_DNA"/>
</dbReference>
<dbReference type="RefSeq" id="YP_537020.1">
    <property type="nucleotide sequence ID" value="NC_007932.1"/>
</dbReference>
<dbReference type="SMR" id="Q1XDE8"/>
<dbReference type="GeneID" id="3978985"/>
<dbReference type="GO" id="GO:0009507">
    <property type="term" value="C:chloroplast"/>
    <property type="evidence" value="ECO:0007669"/>
    <property type="project" value="UniProtKB-SubCell"/>
</dbReference>
<dbReference type="GO" id="GO:0022625">
    <property type="term" value="C:cytosolic large ribosomal subunit"/>
    <property type="evidence" value="ECO:0007669"/>
    <property type="project" value="TreeGrafter"/>
</dbReference>
<dbReference type="GO" id="GO:0003729">
    <property type="term" value="F:mRNA binding"/>
    <property type="evidence" value="ECO:0007669"/>
    <property type="project" value="TreeGrafter"/>
</dbReference>
<dbReference type="GO" id="GO:0003735">
    <property type="term" value="F:structural constituent of ribosome"/>
    <property type="evidence" value="ECO:0007669"/>
    <property type="project" value="InterPro"/>
</dbReference>
<dbReference type="GO" id="GO:0006412">
    <property type="term" value="P:translation"/>
    <property type="evidence" value="ECO:0007669"/>
    <property type="project" value="UniProtKB-UniRule"/>
</dbReference>
<dbReference type="CDD" id="cd00387">
    <property type="entry name" value="Ribosomal_L7_L12"/>
    <property type="match status" value="1"/>
</dbReference>
<dbReference type="FunFam" id="3.30.1390.10:FF:000001">
    <property type="entry name" value="50S ribosomal protein L7/L12"/>
    <property type="match status" value="1"/>
</dbReference>
<dbReference type="Gene3D" id="3.30.1390.10">
    <property type="match status" value="1"/>
</dbReference>
<dbReference type="Gene3D" id="1.20.5.710">
    <property type="entry name" value="Single helix bin"/>
    <property type="match status" value="1"/>
</dbReference>
<dbReference type="HAMAP" id="MF_00368">
    <property type="entry name" value="Ribosomal_bL12"/>
    <property type="match status" value="1"/>
</dbReference>
<dbReference type="InterPro" id="IPR000206">
    <property type="entry name" value="Ribosomal_bL12"/>
</dbReference>
<dbReference type="InterPro" id="IPR013823">
    <property type="entry name" value="Ribosomal_bL12_C"/>
</dbReference>
<dbReference type="InterPro" id="IPR014719">
    <property type="entry name" value="Ribosomal_bL12_C/ClpS-like"/>
</dbReference>
<dbReference type="InterPro" id="IPR008932">
    <property type="entry name" value="Ribosomal_bL12_oligo"/>
</dbReference>
<dbReference type="InterPro" id="IPR036235">
    <property type="entry name" value="Ribosomal_bL12_oligo_N_sf"/>
</dbReference>
<dbReference type="NCBIfam" id="TIGR00855">
    <property type="entry name" value="L12"/>
    <property type="match status" value="1"/>
</dbReference>
<dbReference type="PANTHER" id="PTHR45987">
    <property type="entry name" value="39S RIBOSOMAL PROTEIN L12"/>
    <property type="match status" value="1"/>
</dbReference>
<dbReference type="PANTHER" id="PTHR45987:SF4">
    <property type="entry name" value="LARGE RIBOSOMAL SUBUNIT PROTEIN BL12M"/>
    <property type="match status" value="1"/>
</dbReference>
<dbReference type="Pfam" id="PF00542">
    <property type="entry name" value="Ribosomal_L12"/>
    <property type="match status" value="1"/>
</dbReference>
<dbReference type="Pfam" id="PF16320">
    <property type="entry name" value="Ribosomal_L12_N"/>
    <property type="match status" value="1"/>
</dbReference>
<dbReference type="SUPFAM" id="SSF54736">
    <property type="entry name" value="ClpS-like"/>
    <property type="match status" value="1"/>
</dbReference>
<dbReference type="SUPFAM" id="SSF48300">
    <property type="entry name" value="Ribosomal protein L7/12, oligomerisation (N-terminal) domain"/>
    <property type="match status" value="1"/>
</dbReference>
<gene>
    <name evidence="1" type="primary">rpl12</name>
</gene>